<organism>
    <name type="scientific">Helianthus annuus</name>
    <name type="common">Common sunflower</name>
    <dbReference type="NCBI Taxonomy" id="4232"/>
    <lineage>
        <taxon>Eukaryota</taxon>
        <taxon>Viridiplantae</taxon>
        <taxon>Streptophyta</taxon>
        <taxon>Embryophyta</taxon>
        <taxon>Tracheophyta</taxon>
        <taxon>Spermatophyta</taxon>
        <taxon>Magnoliopsida</taxon>
        <taxon>eudicotyledons</taxon>
        <taxon>Gunneridae</taxon>
        <taxon>Pentapetalae</taxon>
        <taxon>asterids</taxon>
        <taxon>campanulids</taxon>
        <taxon>Asterales</taxon>
        <taxon>Asteraceae</taxon>
        <taxon>Asteroideae</taxon>
        <taxon>Heliantheae alliance</taxon>
        <taxon>Heliantheae</taxon>
        <taxon>Helianthus</taxon>
    </lineage>
</organism>
<feature type="chain" id="PRO_0000277117" description="Photosystem I P700 chlorophyll a apoprotein A2">
    <location>
        <begin position="1"/>
        <end position="734"/>
    </location>
</feature>
<feature type="transmembrane region" description="Helical; Name=I" evidence="1">
    <location>
        <begin position="46"/>
        <end position="69"/>
    </location>
</feature>
<feature type="transmembrane region" description="Helical; Name=II" evidence="1">
    <location>
        <begin position="135"/>
        <end position="158"/>
    </location>
</feature>
<feature type="transmembrane region" description="Helical; Name=III" evidence="1">
    <location>
        <begin position="175"/>
        <end position="199"/>
    </location>
</feature>
<feature type="transmembrane region" description="Helical; Name=IV" evidence="1">
    <location>
        <begin position="273"/>
        <end position="291"/>
    </location>
</feature>
<feature type="transmembrane region" description="Helical; Name=V" evidence="1">
    <location>
        <begin position="330"/>
        <end position="353"/>
    </location>
</feature>
<feature type="transmembrane region" description="Helical; Name=VI" evidence="1">
    <location>
        <begin position="369"/>
        <end position="395"/>
    </location>
</feature>
<feature type="transmembrane region" description="Helical; Name=VII" evidence="1">
    <location>
        <begin position="417"/>
        <end position="439"/>
    </location>
</feature>
<feature type="transmembrane region" description="Helical; Name=VIII" evidence="1">
    <location>
        <begin position="517"/>
        <end position="535"/>
    </location>
</feature>
<feature type="transmembrane region" description="Helical; Name=IX" evidence="1">
    <location>
        <begin position="575"/>
        <end position="596"/>
    </location>
</feature>
<feature type="transmembrane region" description="Helical; Name=X" evidence="1">
    <location>
        <begin position="643"/>
        <end position="665"/>
    </location>
</feature>
<feature type="transmembrane region" description="Helical; Name=XI" evidence="1">
    <location>
        <begin position="707"/>
        <end position="727"/>
    </location>
</feature>
<feature type="binding site" evidence="1">
    <location>
        <position position="559"/>
    </location>
    <ligand>
        <name>[4Fe-4S] cluster</name>
        <dbReference type="ChEBI" id="CHEBI:49883"/>
        <note>ligand shared between dimeric partners</note>
    </ligand>
</feature>
<feature type="binding site" evidence="1">
    <location>
        <position position="568"/>
    </location>
    <ligand>
        <name>[4Fe-4S] cluster</name>
        <dbReference type="ChEBI" id="CHEBI:49883"/>
        <note>ligand shared between dimeric partners</note>
    </ligand>
</feature>
<feature type="binding site" description="axial binding residue" evidence="1">
    <location>
        <position position="654"/>
    </location>
    <ligand>
        <name>chlorophyll a</name>
        <dbReference type="ChEBI" id="CHEBI:58416"/>
        <label>B1</label>
    </ligand>
    <ligandPart>
        <name>Mg</name>
        <dbReference type="ChEBI" id="CHEBI:25107"/>
    </ligandPart>
</feature>
<feature type="binding site" description="axial binding residue" evidence="1">
    <location>
        <position position="662"/>
    </location>
    <ligand>
        <name>chlorophyll a</name>
        <dbReference type="ChEBI" id="CHEBI:58416"/>
        <label>B3</label>
    </ligand>
    <ligandPart>
        <name>Mg</name>
        <dbReference type="ChEBI" id="CHEBI:25107"/>
    </ligandPart>
</feature>
<feature type="binding site" evidence="1">
    <location>
        <position position="670"/>
    </location>
    <ligand>
        <name>chlorophyll a</name>
        <dbReference type="ChEBI" id="CHEBI:58416"/>
        <label>B3</label>
    </ligand>
</feature>
<feature type="binding site" evidence="1">
    <location>
        <position position="671"/>
    </location>
    <ligand>
        <name>phylloquinone</name>
        <dbReference type="ChEBI" id="CHEBI:18067"/>
        <label>B</label>
    </ligand>
</feature>
<comment type="function">
    <text evidence="1">PsaA and PsaB bind P700, the primary electron donor of photosystem I (PSI), as well as the electron acceptors A0, A1 and FX. PSI is a plastocyanin-ferredoxin oxidoreductase, converting photonic excitation into a charge separation, which transfers an electron from the donor P700 chlorophyll pair to the spectroscopically characterized acceptors A0, A1, FX, FA and FB in turn. Oxidized P700 is reduced on the lumenal side of the thylakoid membrane by plastocyanin.</text>
</comment>
<comment type="catalytic activity">
    <reaction evidence="1">
        <text>reduced [plastocyanin] + hnu + oxidized [2Fe-2S]-[ferredoxin] = oxidized [plastocyanin] + reduced [2Fe-2S]-[ferredoxin]</text>
        <dbReference type="Rhea" id="RHEA:30407"/>
        <dbReference type="Rhea" id="RHEA-COMP:10000"/>
        <dbReference type="Rhea" id="RHEA-COMP:10001"/>
        <dbReference type="Rhea" id="RHEA-COMP:10039"/>
        <dbReference type="Rhea" id="RHEA-COMP:10040"/>
        <dbReference type="ChEBI" id="CHEBI:29036"/>
        <dbReference type="ChEBI" id="CHEBI:30212"/>
        <dbReference type="ChEBI" id="CHEBI:33737"/>
        <dbReference type="ChEBI" id="CHEBI:33738"/>
        <dbReference type="ChEBI" id="CHEBI:49552"/>
        <dbReference type="EC" id="1.97.1.12"/>
    </reaction>
</comment>
<comment type="cofactor">
    <text evidence="1">P700 is a chlorophyll a/chlorophyll a' dimer, A0 is one or more chlorophyll a, A1 is one or both phylloquinones and FX is a shared 4Fe-4S iron-sulfur center.</text>
</comment>
<comment type="subunit">
    <text evidence="1">The PsaA/B heterodimer binds the P700 chlorophyll special pair and subsequent electron acceptors. PSI consists of a core antenna complex that captures photons, and an electron transfer chain that converts photonic excitation into a charge separation. The eukaryotic PSI reaction center is composed of at least 11 subunits.</text>
</comment>
<comment type="subcellular location">
    <subcellularLocation>
        <location>Plastid</location>
        <location>Chloroplast thylakoid membrane</location>
        <topology>Multi-pass membrane protein</topology>
    </subcellularLocation>
</comment>
<comment type="similarity">
    <text evidence="1">Belongs to the PsaA/PsaB family.</text>
</comment>
<accession>Q1KXW0</accession>
<protein>
    <recommendedName>
        <fullName evidence="1">Photosystem I P700 chlorophyll a apoprotein A2</fullName>
        <ecNumber evidence="1">1.97.1.12</ecNumber>
    </recommendedName>
    <alternativeName>
        <fullName evidence="1">PSI-B</fullName>
    </alternativeName>
    <alternativeName>
        <fullName evidence="1">PsaB</fullName>
    </alternativeName>
</protein>
<name>PSAB_HELAN</name>
<proteinExistence type="inferred from homology"/>
<evidence type="ECO:0000255" key="1">
    <source>
        <dbReference type="HAMAP-Rule" id="MF_00482"/>
    </source>
</evidence>
<dbReference type="EC" id="1.97.1.12" evidence="1"/>
<dbReference type="EMBL" id="DQ383815">
    <property type="protein sequence ID" value="ABD47145.1"/>
    <property type="molecule type" value="Genomic_DNA"/>
</dbReference>
<dbReference type="RefSeq" id="YP_588116.1">
    <property type="nucleotide sequence ID" value="NC_007977.1"/>
</dbReference>
<dbReference type="SMR" id="Q1KXW0"/>
<dbReference type="EnsemblPlants" id="mRNA:HanXRQr2_Chr02g0061711">
    <property type="protein sequence ID" value="CDS:HanXRQr2_Chr02g0061711.1"/>
    <property type="gene ID" value="HanXRQr2_Chr02g0061711"/>
</dbReference>
<dbReference type="GeneID" id="4055591"/>
<dbReference type="Gramene" id="mRNA:HanXRQr2_Chr02g0061711">
    <property type="protein sequence ID" value="CDS:HanXRQr2_Chr02g0061711.1"/>
    <property type="gene ID" value="HanXRQr2_Chr02g0061711"/>
</dbReference>
<dbReference type="KEGG" id="han:4055591"/>
<dbReference type="OrthoDB" id="349at2759"/>
<dbReference type="PhylomeDB" id="Q1KXW0"/>
<dbReference type="GO" id="GO:0009535">
    <property type="term" value="C:chloroplast thylakoid membrane"/>
    <property type="evidence" value="ECO:0007669"/>
    <property type="project" value="UniProtKB-SubCell"/>
</dbReference>
<dbReference type="GO" id="GO:0009522">
    <property type="term" value="C:photosystem I"/>
    <property type="evidence" value="ECO:0007669"/>
    <property type="project" value="UniProtKB-KW"/>
</dbReference>
<dbReference type="GO" id="GO:0051539">
    <property type="term" value="F:4 iron, 4 sulfur cluster binding"/>
    <property type="evidence" value="ECO:0007669"/>
    <property type="project" value="UniProtKB-KW"/>
</dbReference>
<dbReference type="GO" id="GO:0016168">
    <property type="term" value="F:chlorophyll binding"/>
    <property type="evidence" value="ECO:0007669"/>
    <property type="project" value="UniProtKB-KW"/>
</dbReference>
<dbReference type="GO" id="GO:0009055">
    <property type="term" value="F:electron transfer activity"/>
    <property type="evidence" value="ECO:0007669"/>
    <property type="project" value="UniProtKB-UniRule"/>
</dbReference>
<dbReference type="GO" id="GO:0000287">
    <property type="term" value="F:magnesium ion binding"/>
    <property type="evidence" value="ECO:0007669"/>
    <property type="project" value="UniProtKB-UniRule"/>
</dbReference>
<dbReference type="GO" id="GO:0016491">
    <property type="term" value="F:oxidoreductase activity"/>
    <property type="evidence" value="ECO:0007669"/>
    <property type="project" value="UniProtKB-KW"/>
</dbReference>
<dbReference type="GO" id="GO:0015979">
    <property type="term" value="P:photosynthesis"/>
    <property type="evidence" value="ECO:0007669"/>
    <property type="project" value="UniProtKB-UniRule"/>
</dbReference>
<dbReference type="FunFam" id="1.20.1130.10:FF:000001">
    <property type="entry name" value="Photosystem I P700 chlorophyll a apoprotein A2"/>
    <property type="match status" value="1"/>
</dbReference>
<dbReference type="Gene3D" id="1.20.1130.10">
    <property type="entry name" value="Photosystem I PsaA/PsaB"/>
    <property type="match status" value="1"/>
</dbReference>
<dbReference type="HAMAP" id="MF_00482">
    <property type="entry name" value="PSI_PsaB"/>
    <property type="match status" value="1"/>
</dbReference>
<dbReference type="InterPro" id="IPR001280">
    <property type="entry name" value="PSI_PsaA/B"/>
</dbReference>
<dbReference type="InterPro" id="IPR020586">
    <property type="entry name" value="PSI_PsaA/B_CS"/>
</dbReference>
<dbReference type="InterPro" id="IPR036408">
    <property type="entry name" value="PSI_PsaA/B_sf"/>
</dbReference>
<dbReference type="InterPro" id="IPR006244">
    <property type="entry name" value="PSI_PsaB"/>
</dbReference>
<dbReference type="NCBIfam" id="TIGR01336">
    <property type="entry name" value="psaB"/>
    <property type="match status" value="1"/>
</dbReference>
<dbReference type="PANTHER" id="PTHR30128">
    <property type="entry name" value="OUTER MEMBRANE PROTEIN, OMPA-RELATED"/>
    <property type="match status" value="1"/>
</dbReference>
<dbReference type="PANTHER" id="PTHR30128:SF19">
    <property type="entry name" value="PHOTOSYSTEM I P700 CHLOROPHYLL A APOPROTEIN A1-RELATED"/>
    <property type="match status" value="1"/>
</dbReference>
<dbReference type="Pfam" id="PF00223">
    <property type="entry name" value="PsaA_PsaB"/>
    <property type="match status" value="1"/>
</dbReference>
<dbReference type="PIRSF" id="PIRSF002905">
    <property type="entry name" value="PSI_A"/>
    <property type="match status" value="1"/>
</dbReference>
<dbReference type="PRINTS" id="PR00257">
    <property type="entry name" value="PHOTSYSPSAAB"/>
</dbReference>
<dbReference type="SUPFAM" id="SSF81558">
    <property type="entry name" value="Photosystem I subunits PsaA/PsaB"/>
    <property type="match status" value="1"/>
</dbReference>
<dbReference type="PROSITE" id="PS00419">
    <property type="entry name" value="PHOTOSYSTEM_I_PSAAB"/>
    <property type="match status" value="1"/>
</dbReference>
<geneLocation type="chloroplast"/>
<sequence length="734" mass="82379">MALRFPRFSQGLAQDPTTRRIWFGIATAHDFESHDDITEERLYQNIFASHFGQLAIIFLWTSGNLFHVAWQGNFESWVQDPLHVRPIAHAIWDPHFGQPAVEAFTRGGAPGPVNIAYSGVYQWWYTIGLRTNEDLYTGALFLLFISAISLIAGWLHLQPKWKPSVSWFKNAESRLNHHLSGLFGVSSLAWTGHLVHVAIPASRGESVRWNNFLDVLPHPQGLGPLFTGQWNLYAQNPDSSSHLFGTSQGAGTAILTLLGGFHPQTQSLWLTDMAHHHLAIAFIFLIAGHMYRTNFGIGHSMKDLLDAHIPPGGRLGRGHKGLYDTINNSIHFQLGLALASLGVITSLVAQHMYSLPAYAFIAQDFTTQAALYTHHQYIAGFIMTGAFAHGAIFFIRDYNPEQNEDNVLARMLEHKEAIISHLSWASLFLGFHTLGLYVHNDVMLAFGTPEKQILIEPIFAQWIQSAHGKTSYGFDILLSSTSGPAFNAGRSIWLPGWLNAVNENSNSLFLTIGPGDFLVHHAIALGLHTTTLILVKGALDARGSKLMPDKKDFGYSFPCDGPGRGGTCDISAWDAFYLAVFWMLNTIGWVTFYWHWKHITLWQGNVSQFNESSTYLMGWLRDYLWLNSSQLINGYNPFGMNSLSVWAWMFLFGHLVWATGFMFLISWRGYWQELIETLAWAHERTPLANLIRWRDKPVALSIVQARLVGLAHFSVGYIFTYAAFLIASTSGKFG</sequence>
<reference key="1">
    <citation type="submission" date="2006-01" db="EMBL/GenBank/DDBJ databases">
        <title>A comparison of the first two published chloroplast genomes in Asteraceae: Lactuca and Helianthus.</title>
        <authorList>
            <person name="Timme R.E."/>
            <person name="Kuehl J.V."/>
            <person name="Boore J.L."/>
            <person name="Jansen R.K."/>
        </authorList>
    </citation>
    <scope>NUCLEOTIDE SEQUENCE [LARGE SCALE GENOMIC DNA]</scope>
    <source>
        <strain>cv. HA383</strain>
    </source>
</reference>
<gene>
    <name evidence="1" type="primary">psaB</name>
</gene>
<keyword id="KW-0004">4Fe-4S</keyword>
<keyword id="KW-0148">Chlorophyll</keyword>
<keyword id="KW-0150">Chloroplast</keyword>
<keyword id="KW-0157">Chromophore</keyword>
<keyword id="KW-0249">Electron transport</keyword>
<keyword id="KW-0408">Iron</keyword>
<keyword id="KW-0411">Iron-sulfur</keyword>
<keyword id="KW-0460">Magnesium</keyword>
<keyword id="KW-0472">Membrane</keyword>
<keyword id="KW-0479">Metal-binding</keyword>
<keyword id="KW-0560">Oxidoreductase</keyword>
<keyword id="KW-0602">Photosynthesis</keyword>
<keyword id="KW-0603">Photosystem I</keyword>
<keyword id="KW-0934">Plastid</keyword>
<keyword id="KW-0793">Thylakoid</keyword>
<keyword id="KW-0812">Transmembrane</keyword>
<keyword id="KW-1133">Transmembrane helix</keyword>
<keyword id="KW-0813">Transport</keyword>